<comment type="function">
    <text evidence="1">Catalyzes the deamination of various vicinal amino-alcohols to oxo compounds. Allows this organism to utilize ethanolamine as the sole source of nitrogen and carbon in the presence of vitamin B12.</text>
</comment>
<comment type="catalytic activity">
    <reaction evidence="1">
        <text>ethanolamine = acetaldehyde + NH4(+)</text>
        <dbReference type="Rhea" id="RHEA:15313"/>
        <dbReference type="ChEBI" id="CHEBI:15343"/>
        <dbReference type="ChEBI" id="CHEBI:28938"/>
        <dbReference type="ChEBI" id="CHEBI:57603"/>
        <dbReference type="EC" id="4.3.1.7"/>
    </reaction>
</comment>
<comment type="cofactor">
    <cofactor evidence="1">
        <name>adenosylcob(III)alamin</name>
        <dbReference type="ChEBI" id="CHEBI:18408"/>
    </cofactor>
    <text evidence="1">Binds between the large and small subunits.</text>
</comment>
<comment type="pathway">
    <text evidence="1">Amine and polyamine degradation; ethanolamine degradation.</text>
</comment>
<comment type="subunit">
    <text evidence="1">The basic unit is a heterodimer which dimerizes to form tetramers. The heterotetramers trimerize; 6 large subunits form a core ring with 6 small subunits projecting outwards.</text>
</comment>
<comment type="subcellular location">
    <subcellularLocation>
        <location evidence="1">Bacterial microcompartment</location>
    </subcellularLocation>
</comment>
<comment type="similarity">
    <text evidence="1">Belongs to the EutB family.</text>
</comment>
<name>EUTB_ECO57</name>
<proteinExistence type="inferred from homology"/>
<sequence>MKLKTTLFGNVYQFKDVKEVLAKANELRSGDVLAGVAAASSQERVAAKQVLSEMTVADIRNNPVIAYEDDCVTRLIQDDVNETAYNQIKNWSISELREYVLSDETSVDDIAFTRKGLTSEVVAAVAKICSNADLIYGAKKMPVIKKANTTIGIPGTFSARLQPNDTRDDVQSIAAQIYEGLSFGVGDAVIGVNPVTDDVENLSRVLDTIYGVIDKFNIPTQGCVLAHVTTQIEAIRRGAPGGLIFQSICGSEKGLKEFGVELAMLDEARAVGAEFNRIAGENCLYFETGQGSALSAGANFGADQVTMEARNYGLARHYDPFIVNTVVGFIGPEYLYNDRQIIRAGLEDHFMGKLSGISMGCDCCYTNHADADQNLNENLMILLATAGCNYIMGMPLGDDIMLNYQTTAFHDTATVRQLLNLRPSPEFERWLESMGIMANGRLTKRAGDPSLFF</sequence>
<keyword id="KW-1283">Bacterial microcompartment</keyword>
<keyword id="KW-0846">Cobalamin</keyword>
<keyword id="KW-0170">Cobalt</keyword>
<keyword id="KW-0456">Lyase</keyword>
<keyword id="KW-1185">Reference proteome</keyword>
<reference key="1">
    <citation type="journal article" date="2001" name="Nature">
        <title>Genome sequence of enterohaemorrhagic Escherichia coli O157:H7.</title>
        <authorList>
            <person name="Perna N.T."/>
            <person name="Plunkett G. III"/>
            <person name="Burland V."/>
            <person name="Mau B."/>
            <person name="Glasner J.D."/>
            <person name="Rose D.J."/>
            <person name="Mayhew G.F."/>
            <person name="Evans P.S."/>
            <person name="Gregor J."/>
            <person name="Kirkpatrick H.A."/>
            <person name="Posfai G."/>
            <person name="Hackett J."/>
            <person name="Klink S."/>
            <person name="Boutin A."/>
            <person name="Shao Y."/>
            <person name="Miller L."/>
            <person name="Grotbeck E.J."/>
            <person name="Davis N.W."/>
            <person name="Lim A."/>
            <person name="Dimalanta E.T."/>
            <person name="Potamousis K."/>
            <person name="Apodaca J."/>
            <person name="Anantharaman T.S."/>
            <person name="Lin J."/>
            <person name="Yen G."/>
            <person name="Schwartz D.C."/>
            <person name="Welch R.A."/>
            <person name="Blattner F.R."/>
        </authorList>
    </citation>
    <scope>NUCLEOTIDE SEQUENCE [LARGE SCALE GENOMIC DNA]</scope>
    <source>
        <strain>O157:H7 / EDL933 / ATCC 700927 / EHEC</strain>
    </source>
</reference>
<reference key="2">
    <citation type="journal article" date="2001" name="DNA Res.">
        <title>Complete genome sequence of enterohemorrhagic Escherichia coli O157:H7 and genomic comparison with a laboratory strain K-12.</title>
        <authorList>
            <person name="Hayashi T."/>
            <person name="Makino K."/>
            <person name="Ohnishi M."/>
            <person name="Kurokawa K."/>
            <person name="Ishii K."/>
            <person name="Yokoyama K."/>
            <person name="Han C.-G."/>
            <person name="Ohtsubo E."/>
            <person name="Nakayama K."/>
            <person name="Murata T."/>
            <person name="Tanaka M."/>
            <person name="Tobe T."/>
            <person name="Iida T."/>
            <person name="Takami H."/>
            <person name="Honda T."/>
            <person name="Sasakawa C."/>
            <person name="Ogasawara N."/>
            <person name="Yasunaga T."/>
            <person name="Kuhara S."/>
            <person name="Shiba T."/>
            <person name="Hattori M."/>
            <person name="Shinagawa H."/>
        </authorList>
    </citation>
    <scope>NUCLEOTIDE SEQUENCE [LARGE SCALE GENOMIC DNA]</scope>
    <source>
        <strain>O157:H7 / Sakai / RIMD 0509952 / EHEC</strain>
    </source>
</reference>
<dbReference type="EC" id="4.3.1.7" evidence="1"/>
<dbReference type="EMBL" id="AE005174">
    <property type="protein sequence ID" value="AAG57559.1"/>
    <property type="molecule type" value="Genomic_DNA"/>
</dbReference>
<dbReference type="EMBL" id="BA000007">
    <property type="protein sequence ID" value="BAB36735.1"/>
    <property type="molecule type" value="Genomic_DNA"/>
</dbReference>
<dbReference type="PIR" id="C85887">
    <property type="entry name" value="C85887"/>
</dbReference>
<dbReference type="PIR" id="H91042">
    <property type="entry name" value="H91042"/>
</dbReference>
<dbReference type="RefSeq" id="NP_311339.1">
    <property type="nucleotide sequence ID" value="NC_002695.1"/>
</dbReference>
<dbReference type="RefSeq" id="WP_000769961.1">
    <property type="nucleotide sequence ID" value="NZ_VOAI01000001.1"/>
</dbReference>
<dbReference type="SMR" id="P0AEJ7"/>
<dbReference type="STRING" id="155864.Z3706"/>
<dbReference type="GeneID" id="75204289"/>
<dbReference type="GeneID" id="915295"/>
<dbReference type="KEGG" id="ece:Z3706"/>
<dbReference type="KEGG" id="ecs:ECs_3312"/>
<dbReference type="PATRIC" id="fig|386585.9.peg.3459"/>
<dbReference type="eggNOG" id="COG4303">
    <property type="taxonomic scope" value="Bacteria"/>
</dbReference>
<dbReference type="HOGENOM" id="CLU_048555_0_0_6"/>
<dbReference type="OMA" id="PMADDCM"/>
<dbReference type="UniPathway" id="UPA00560"/>
<dbReference type="Proteomes" id="UP000000558">
    <property type="component" value="Chromosome"/>
</dbReference>
<dbReference type="Proteomes" id="UP000002519">
    <property type="component" value="Chromosome"/>
</dbReference>
<dbReference type="GO" id="GO:0005829">
    <property type="term" value="C:cytosol"/>
    <property type="evidence" value="ECO:0007669"/>
    <property type="project" value="TreeGrafter"/>
</dbReference>
<dbReference type="GO" id="GO:0009350">
    <property type="term" value="C:ethanolamine ammonia-lyase complex"/>
    <property type="evidence" value="ECO:0007669"/>
    <property type="project" value="UniProtKB-UniRule"/>
</dbReference>
<dbReference type="GO" id="GO:0031471">
    <property type="term" value="C:ethanolamine degradation polyhedral organelle"/>
    <property type="evidence" value="ECO:0007669"/>
    <property type="project" value="UniProtKB-UniRule"/>
</dbReference>
<dbReference type="GO" id="GO:0031419">
    <property type="term" value="F:cobalamin binding"/>
    <property type="evidence" value="ECO:0007669"/>
    <property type="project" value="UniProtKB-UniRule"/>
</dbReference>
<dbReference type="GO" id="GO:0008851">
    <property type="term" value="F:ethanolamine ammonia-lyase activity"/>
    <property type="evidence" value="ECO:0007669"/>
    <property type="project" value="UniProtKB-UniRule"/>
</dbReference>
<dbReference type="GO" id="GO:0006520">
    <property type="term" value="P:amino acid metabolic process"/>
    <property type="evidence" value="ECO:0007669"/>
    <property type="project" value="InterPro"/>
</dbReference>
<dbReference type="GO" id="GO:0046336">
    <property type="term" value="P:ethanolamine catabolic process"/>
    <property type="evidence" value="ECO:0007669"/>
    <property type="project" value="UniProtKB-UniRule"/>
</dbReference>
<dbReference type="FunFam" id="1.10.220.70:FF:000001">
    <property type="entry name" value="Ethanolamine ammonia-lyase heavy chain"/>
    <property type="match status" value="1"/>
</dbReference>
<dbReference type="FunFam" id="2.30.170.30:FF:000001">
    <property type="entry name" value="Ethanolamine ammonia-lyase heavy chain"/>
    <property type="match status" value="1"/>
</dbReference>
<dbReference type="FunFam" id="3.20.20.70:FF:000055">
    <property type="entry name" value="Ethanolamine ammonia-lyase heavy chain"/>
    <property type="match status" value="1"/>
</dbReference>
<dbReference type="Gene3D" id="3.20.20.70">
    <property type="entry name" value="Aldolase class I"/>
    <property type="match status" value="1"/>
</dbReference>
<dbReference type="Gene3D" id="2.30.170.30">
    <property type="entry name" value="ethanolamine ammonia-lyase heavy chain domain like"/>
    <property type="match status" value="1"/>
</dbReference>
<dbReference type="Gene3D" id="1.10.220.70">
    <property type="entry name" value="lyase"/>
    <property type="match status" value="1"/>
</dbReference>
<dbReference type="HAMAP" id="MF_00861">
    <property type="entry name" value="EutB"/>
    <property type="match status" value="1"/>
</dbReference>
<dbReference type="InterPro" id="IPR013785">
    <property type="entry name" value="Aldolase_TIM"/>
</dbReference>
<dbReference type="InterPro" id="IPR010628">
    <property type="entry name" value="EutB"/>
</dbReference>
<dbReference type="InterPro" id="IPR044939">
    <property type="entry name" value="EutB_dom_2_sf"/>
</dbReference>
<dbReference type="InterPro" id="IPR044941">
    <property type="entry name" value="EutB_N_sf"/>
</dbReference>
<dbReference type="NCBIfam" id="NF011649">
    <property type="entry name" value="PRK15067.1"/>
    <property type="match status" value="1"/>
</dbReference>
<dbReference type="PANTHER" id="PTHR39329">
    <property type="entry name" value="ETHANOLAMINE AMMONIA-LYASE HEAVY CHAIN"/>
    <property type="match status" value="1"/>
</dbReference>
<dbReference type="PANTHER" id="PTHR39329:SF1">
    <property type="entry name" value="ETHANOLAMINE AMMONIA-LYASE LARGE SUBUNIT"/>
    <property type="match status" value="1"/>
</dbReference>
<dbReference type="Pfam" id="PF06751">
    <property type="entry name" value="EutB"/>
    <property type="match status" value="1"/>
</dbReference>
<dbReference type="PIRSF" id="PIRSF018788">
    <property type="entry name" value="EutB"/>
    <property type="match status" value="1"/>
</dbReference>
<evidence type="ECO:0000255" key="1">
    <source>
        <dbReference type="HAMAP-Rule" id="MF_00861"/>
    </source>
</evidence>
<feature type="chain" id="PRO_0000087082" description="Ethanolamine ammonia-lyase large subunit">
    <location>
        <begin position="1"/>
        <end position="453"/>
    </location>
</feature>
<feature type="binding site" evidence="1">
    <location>
        <begin position="160"/>
        <end position="162"/>
    </location>
    <ligand>
        <name>substrate</name>
    </ligand>
</feature>
<feature type="binding site" evidence="1">
    <location>
        <position position="193"/>
    </location>
    <ligand>
        <name>substrate</name>
    </ligand>
</feature>
<feature type="binding site" evidence="1">
    <location>
        <position position="194"/>
    </location>
    <ligand>
        <name>adenosylcob(III)alamin</name>
        <dbReference type="ChEBI" id="CHEBI:18408"/>
    </ligand>
</feature>
<feature type="binding site" evidence="1">
    <location>
        <position position="246"/>
    </location>
    <ligand>
        <name>adenosylcob(III)alamin</name>
        <dbReference type="ChEBI" id="CHEBI:18408"/>
    </ligand>
</feature>
<feature type="binding site" evidence="1">
    <location>
        <position position="287"/>
    </location>
    <ligand>
        <name>substrate</name>
    </ligand>
</feature>
<feature type="binding site" evidence="1">
    <location>
        <position position="295"/>
    </location>
    <ligand>
        <name>adenosylcob(III)alamin</name>
        <dbReference type="ChEBI" id="CHEBI:18408"/>
    </ligand>
</feature>
<feature type="binding site" evidence="1">
    <location>
        <position position="362"/>
    </location>
    <ligand>
        <name>substrate</name>
    </ligand>
</feature>
<feature type="binding site" evidence="1">
    <location>
        <position position="401"/>
    </location>
    <ligand>
        <name>adenosylcob(III)alamin</name>
        <dbReference type="ChEBI" id="CHEBI:18408"/>
    </ligand>
</feature>
<gene>
    <name evidence="1" type="primary">eutB</name>
    <name type="ordered locus">Z3706</name>
    <name type="ordered locus">ECs3312</name>
</gene>
<protein>
    <recommendedName>
        <fullName evidence="1">Ethanolamine ammonia-lyase large subunit</fullName>
        <shortName evidence="1">EAL large subunit</shortName>
        <ecNumber evidence="1">4.3.1.7</ecNumber>
    </recommendedName>
</protein>
<accession>P0AEJ7</accession>
<accession>P19635</accession>
<accession>P78094</accession>
<accession>P78300</accession>
<organism>
    <name type="scientific">Escherichia coli O157:H7</name>
    <dbReference type="NCBI Taxonomy" id="83334"/>
    <lineage>
        <taxon>Bacteria</taxon>
        <taxon>Pseudomonadati</taxon>
        <taxon>Pseudomonadota</taxon>
        <taxon>Gammaproteobacteria</taxon>
        <taxon>Enterobacterales</taxon>
        <taxon>Enterobacteriaceae</taxon>
        <taxon>Escherichia</taxon>
    </lineage>
</organism>